<name>BLO11_PSEAI</name>
<organism>
    <name type="scientific">Pseudomonas aeruginosa</name>
    <dbReference type="NCBI Taxonomy" id="287"/>
    <lineage>
        <taxon>Bacteria</taxon>
        <taxon>Pseudomonadati</taxon>
        <taxon>Pseudomonadota</taxon>
        <taxon>Gammaproteobacteria</taxon>
        <taxon>Pseudomonadales</taxon>
        <taxon>Pseudomonadaceae</taxon>
        <taxon>Pseudomonas</taxon>
    </lineage>
</organism>
<gene>
    <name type="primary">bla</name>
    <name type="synonym">oxa11</name>
</gene>
<sequence length="266" mass="29538">MKTFAAYVIIACLSSTALAGSITENTSWNKEFSAEAVNGVFVLCKSSSKSCATNDLARASKEYLPASTFKIPNAIIGLETGVIKNEHQVFKWDGKPRAMKQWERDLTLRGAIQVSAVPVFQQIAREVGEVRMQKYLKKFSYGSQNISGGIDKFWLEDQLRISAVNQVEFLESLYLNKLSASKENQLIVKEALVTEAAPEYLVHSKTGFSGVGTESNPGVAWWVGWVEKETEVYFFAFNMDIDNESKLPLRKSIPTKIMESEGIIGG</sequence>
<accession>Q06778</accession>
<geneLocation type="plasmid">
    <name>pMLH52</name>
</geneLocation>
<comment type="function">
    <text>Hydrolyzes carbenicillin, oxacillin and cephalosporin. Does not hydrolyze cefoxitin or carbapenems.</text>
</comment>
<comment type="catalytic activity">
    <reaction evidence="2">
        <text>a beta-lactam + H2O = a substituted beta-amino acid</text>
        <dbReference type="Rhea" id="RHEA:20401"/>
        <dbReference type="ChEBI" id="CHEBI:15377"/>
        <dbReference type="ChEBI" id="CHEBI:35627"/>
        <dbReference type="ChEBI" id="CHEBI:140347"/>
        <dbReference type="EC" id="3.5.2.6"/>
    </reaction>
</comment>
<comment type="similarity">
    <text evidence="3">Belongs to the class-D beta-lactamase family.</text>
</comment>
<protein>
    <recommendedName>
        <fullName>Beta-lactamase OXA-11</fullName>
        <ecNumber>3.5.2.6</ecNumber>
    </recommendedName>
</protein>
<evidence type="ECO:0000250" key="1"/>
<evidence type="ECO:0000255" key="2">
    <source>
        <dbReference type="PROSITE-ProRule" id="PRU10103"/>
    </source>
</evidence>
<evidence type="ECO:0000305" key="3"/>
<evidence type="ECO:0007829" key="4">
    <source>
        <dbReference type="PDB" id="9IXO"/>
    </source>
</evidence>
<keyword id="KW-0002">3D-structure</keyword>
<keyword id="KW-0046">Antibiotic resistance</keyword>
<keyword id="KW-0378">Hydrolase</keyword>
<keyword id="KW-0614">Plasmid</keyword>
<keyword id="KW-0732">Signal</keyword>
<feature type="signal peptide" evidence="1">
    <location>
        <begin position="1"/>
        <end position="20"/>
    </location>
</feature>
<feature type="chain" id="PRO_0000017031" description="Beta-lactamase OXA-11">
    <location>
        <begin position="21"/>
        <end position="266"/>
    </location>
</feature>
<feature type="active site" description="Acyl-ester intermediate" evidence="2">
    <location>
        <position position="67"/>
    </location>
</feature>
<feature type="binding site" evidence="1">
    <location>
        <begin position="205"/>
        <end position="207"/>
    </location>
    <ligand>
        <name>substrate</name>
    </ligand>
</feature>
<feature type="modified residue" description="N6-carboxylysine" evidence="1">
    <location>
        <position position="70"/>
    </location>
</feature>
<feature type="strand" evidence="4">
    <location>
        <begin position="22"/>
        <end position="24"/>
    </location>
</feature>
<feature type="helix" evidence="4">
    <location>
        <begin position="26"/>
        <end position="29"/>
    </location>
</feature>
<feature type="helix" evidence="4">
    <location>
        <begin position="30"/>
        <end position="33"/>
    </location>
</feature>
<feature type="turn" evidence="4">
    <location>
        <begin position="34"/>
        <end position="36"/>
    </location>
</feature>
<feature type="strand" evidence="4">
    <location>
        <begin position="39"/>
        <end position="47"/>
    </location>
</feature>
<feature type="strand" evidence="4">
    <location>
        <begin position="50"/>
        <end position="54"/>
    </location>
</feature>
<feature type="helix" evidence="4">
    <location>
        <begin position="56"/>
        <end position="59"/>
    </location>
</feature>
<feature type="helix" evidence="4">
    <location>
        <begin position="66"/>
        <end position="69"/>
    </location>
</feature>
<feature type="helix" evidence="4">
    <location>
        <begin position="70"/>
        <end position="79"/>
    </location>
</feature>
<feature type="helix" evidence="4">
    <location>
        <begin position="100"/>
        <end position="102"/>
    </location>
</feature>
<feature type="helix" evidence="4">
    <location>
        <begin position="108"/>
        <end position="113"/>
    </location>
</feature>
<feature type="helix" evidence="4">
    <location>
        <begin position="117"/>
        <end position="139"/>
    </location>
</feature>
<feature type="turn" evidence="4">
    <location>
        <begin position="150"/>
        <end position="152"/>
    </location>
</feature>
<feature type="helix" evidence="4">
    <location>
        <begin position="153"/>
        <end position="156"/>
    </location>
</feature>
<feature type="helix" evidence="4">
    <location>
        <begin position="163"/>
        <end position="174"/>
    </location>
</feature>
<feature type="strand" evidence="4">
    <location>
        <begin position="178"/>
        <end position="180"/>
    </location>
</feature>
<feature type="helix" evidence="4">
    <location>
        <begin position="182"/>
        <end position="191"/>
    </location>
</feature>
<feature type="strand" evidence="4">
    <location>
        <begin position="193"/>
        <end position="197"/>
    </location>
</feature>
<feature type="strand" evidence="4">
    <location>
        <begin position="200"/>
        <end position="208"/>
    </location>
</feature>
<feature type="strand" evidence="4">
    <location>
        <begin position="218"/>
        <end position="228"/>
    </location>
</feature>
<feature type="strand" evidence="4">
    <location>
        <begin position="231"/>
        <end position="242"/>
    </location>
</feature>
<feature type="helix" evidence="4">
    <location>
        <begin position="244"/>
        <end position="248"/>
    </location>
</feature>
<feature type="helix" evidence="4">
    <location>
        <begin position="249"/>
        <end position="260"/>
    </location>
</feature>
<reference key="1">
    <citation type="journal article" date="1993" name="Antimicrob. Agents Chemother.">
        <title>OXA-11, an extended-spectrum variant of OXA-10 (PSE-2) beta-lactamase from Pseudomonas aeruginosa.</title>
        <authorList>
            <person name="Hall L.M.C."/>
            <person name="Livermore D.M."/>
            <person name="Gur D."/>
            <person name="Akova M."/>
            <person name="Akalin H.E."/>
        </authorList>
    </citation>
    <scope>NUCLEOTIDE SEQUENCE [GENOMIC DNA]</scope>
    <source>
        <strain>ABD</strain>
    </source>
</reference>
<proteinExistence type="evidence at protein level"/>
<dbReference type="EC" id="3.5.2.6"/>
<dbReference type="EMBL" id="Z22590">
    <property type="protein sequence ID" value="CAA80304.1"/>
    <property type="molecule type" value="Genomic_DNA"/>
</dbReference>
<dbReference type="PIR" id="S33163">
    <property type="entry name" value="S33163"/>
</dbReference>
<dbReference type="RefSeq" id="WP_063860939.1">
    <property type="nucleotide sequence ID" value="NG_049402.1"/>
</dbReference>
<dbReference type="PDB" id="7N1M">
    <property type="method" value="X-ray"/>
    <property type="resolution" value="1.96 A"/>
    <property type="chains" value="A/B=19-266"/>
</dbReference>
<dbReference type="PDB" id="9IXO">
    <property type="method" value="X-ray"/>
    <property type="resolution" value="1.86 A"/>
    <property type="chains" value="A/B=21-265"/>
</dbReference>
<dbReference type="PDBsum" id="7N1M"/>
<dbReference type="PDBsum" id="9IXO"/>
<dbReference type="SMR" id="Q06778"/>
<dbReference type="CARD" id="ARO:3001406">
    <property type="molecule name" value="OXA-11"/>
    <property type="mechanism identifier" value="ARO:0001004"/>
    <property type="mechanism name" value="antibiotic inactivation"/>
</dbReference>
<dbReference type="KEGG" id="ag:CAA80304"/>
<dbReference type="GO" id="GO:0005886">
    <property type="term" value="C:plasma membrane"/>
    <property type="evidence" value="ECO:0007669"/>
    <property type="project" value="TreeGrafter"/>
</dbReference>
<dbReference type="GO" id="GO:0008800">
    <property type="term" value="F:beta-lactamase activity"/>
    <property type="evidence" value="ECO:0007669"/>
    <property type="project" value="UniProtKB-EC"/>
</dbReference>
<dbReference type="GO" id="GO:0008658">
    <property type="term" value="F:penicillin binding"/>
    <property type="evidence" value="ECO:0007669"/>
    <property type="project" value="InterPro"/>
</dbReference>
<dbReference type="GO" id="GO:0017001">
    <property type="term" value="P:antibiotic catabolic process"/>
    <property type="evidence" value="ECO:0007669"/>
    <property type="project" value="InterPro"/>
</dbReference>
<dbReference type="GO" id="GO:0071555">
    <property type="term" value="P:cell wall organization"/>
    <property type="evidence" value="ECO:0007669"/>
    <property type="project" value="TreeGrafter"/>
</dbReference>
<dbReference type="GO" id="GO:0046677">
    <property type="term" value="P:response to antibiotic"/>
    <property type="evidence" value="ECO:0007669"/>
    <property type="project" value="UniProtKB-KW"/>
</dbReference>
<dbReference type="Gene3D" id="3.40.710.10">
    <property type="entry name" value="DD-peptidase/beta-lactamase superfamily"/>
    <property type="match status" value="1"/>
</dbReference>
<dbReference type="InterPro" id="IPR050515">
    <property type="entry name" value="Bact_Transpept/Beta-Lactamase"/>
</dbReference>
<dbReference type="InterPro" id="IPR012338">
    <property type="entry name" value="Beta-lactam/transpept-like"/>
</dbReference>
<dbReference type="InterPro" id="IPR002137">
    <property type="entry name" value="Beta-lactam_class-D_AS"/>
</dbReference>
<dbReference type="InterPro" id="IPR001460">
    <property type="entry name" value="PCN-bd_Tpept"/>
</dbReference>
<dbReference type="NCBIfam" id="NF012161">
    <property type="entry name" value="bla_class_D_main"/>
    <property type="match status" value="1"/>
</dbReference>
<dbReference type="NCBIfam" id="NF000386">
    <property type="entry name" value="blaOXA-10_like"/>
    <property type="match status" value="1"/>
</dbReference>
<dbReference type="PANTHER" id="PTHR30627:SF6">
    <property type="entry name" value="BETA-LACTAMASE YBXI-RELATED"/>
    <property type="match status" value="1"/>
</dbReference>
<dbReference type="PANTHER" id="PTHR30627">
    <property type="entry name" value="PEPTIDOGLYCAN D,D-TRANSPEPTIDASE"/>
    <property type="match status" value="1"/>
</dbReference>
<dbReference type="Pfam" id="PF00905">
    <property type="entry name" value="Transpeptidase"/>
    <property type="match status" value="1"/>
</dbReference>
<dbReference type="SUPFAM" id="SSF56601">
    <property type="entry name" value="beta-lactamase/transpeptidase-like"/>
    <property type="match status" value="1"/>
</dbReference>
<dbReference type="PROSITE" id="PS00337">
    <property type="entry name" value="BETA_LACTAMASE_D"/>
    <property type="match status" value="1"/>
</dbReference>